<accession>Q8P172</accession>
<organism>
    <name type="scientific">Streptococcus pyogenes serotype M18 (strain MGAS8232)</name>
    <dbReference type="NCBI Taxonomy" id="186103"/>
    <lineage>
        <taxon>Bacteria</taxon>
        <taxon>Bacillati</taxon>
        <taxon>Bacillota</taxon>
        <taxon>Bacilli</taxon>
        <taxon>Lactobacillales</taxon>
        <taxon>Streptococcaceae</taxon>
        <taxon>Streptococcus</taxon>
    </lineage>
</organism>
<sequence>METSDELKQRIGDLSYEVTQHAATESPFTGEYDDFFEKGIYIDIVSGEVLFSSLDKFNSGCGWPAFSKPIENRMVTNHDDSSYGMRRVEVKSREAGSHLGHVFSDGPKEAGGLRYCINSAALKFIPYEQMEKEGYAQWLTLFDET</sequence>
<evidence type="ECO:0000255" key="1">
    <source>
        <dbReference type="HAMAP-Rule" id="MF_01400"/>
    </source>
</evidence>
<evidence type="ECO:0000255" key="2">
    <source>
        <dbReference type="PROSITE-ProRule" id="PRU01126"/>
    </source>
</evidence>
<reference key="1">
    <citation type="journal article" date="2002" name="Proc. Natl. Acad. Sci. U.S.A.">
        <title>Genome sequence and comparative microarray analysis of serotype M18 group A Streptococcus strains associated with acute rheumatic fever outbreaks.</title>
        <authorList>
            <person name="Smoot J.C."/>
            <person name="Barbian K.D."/>
            <person name="Van Gompel J.J."/>
            <person name="Smoot L.M."/>
            <person name="Chaussee M.S."/>
            <person name="Sylva G.L."/>
            <person name="Sturdevant D.E."/>
            <person name="Ricklefs S.M."/>
            <person name="Porcella S.F."/>
            <person name="Parkins L.D."/>
            <person name="Beres S.B."/>
            <person name="Campbell D.S."/>
            <person name="Smith T.M."/>
            <person name="Zhang Q."/>
            <person name="Kapur V."/>
            <person name="Daly J.A."/>
            <person name="Veasy L.G."/>
            <person name="Musser J.M."/>
        </authorList>
    </citation>
    <scope>NUCLEOTIDE SEQUENCE [LARGE SCALE GENOMIC DNA]</scope>
    <source>
        <strain>MGAS8232</strain>
    </source>
</reference>
<keyword id="KW-0560">Oxidoreductase</keyword>
<comment type="catalytic activity">
    <reaction evidence="1">
        <text>L-methionyl-[protein] + [thioredoxin]-disulfide + H2O = L-methionyl-(R)-S-oxide-[protein] + [thioredoxin]-dithiol</text>
        <dbReference type="Rhea" id="RHEA:24164"/>
        <dbReference type="Rhea" id="RHEA-COMP:10698"/>
        <dbReference type="Rhea" id="RHEA-COMP:10700"/>
        <dbReference type="Rhea" id="RHEA-COMP:12313"/>
        <dbReference type="Rhea" id="RHEA-COMP:12314"/>
        <dbReference type="ChEBI" id="CHEBI:15377"/>
        <dbReference type="ChEBI" id="CHEBI:16044"/>
        <dbReference type="ChEBI" id="CHEBI:29950"/>
        <dbReference type="ChEBI" id="CHEBI:45764"/>
        <dbReference type="ChEBI" id="CHEBI:50058"/>
        <dbReference type="EC" id="1.8.4.12"/>
    </reaction>
</comment>
<comment type="similarity">
    <text evidence="1">Belongs to the MsrB Met sulfoxide reductase family.</text>
</comment>
<gene>
    <name evidence="1" type="primary">msrB</name>
    <name type="ordered locus">spyM18_1032</name>
</gene>
<feature type="chain" id="PRO_0000140310" description="Peptide methionine sulfoxide reductase MsrB">
    <location>
        <begin position="1"/>
        <end position="145"/>
    </location>
</feature>
<feature type="domain" description="MsrB" evidence="2">
    <location>
        <begin position="4"/>
        <end position="127"/>
    </location>
</feature>
<feature type="active site" description="Nucleophile" evidence="2">
    <location>
        <position position="116"/>
    </location>
</feature>
<name>MSRB_STRP8</name>
<proteinExistence type="inferred from homology"/>
<protein>
    <recommendedName>
        <fullName evidence="1">Peptide methionine sulfoxide reductase MsrB</fullName>
        <ecNumber evidence="1">1.8.4.12</ecNumber>
    </recommendedName>
    <alternativeName>
        <fullName evidence="1">Peptide-methionine (R)-S-oxide reductase</fullName>
    </alternativeName>
</protein>
<dbReference type="EC" id="1.8.4.12" evidence="1"/>
<dbReference type="EMBL" id="AE009949">
    <property type="protein sequence ID" value="AAL97662.1"/>
    <property type="molecule type" value="Genomic_DNA"/>
</dbReference>
<dbReference type="RefSeq" id="WP_011017722.1">
    <property type="nucleotide sequence ID" value="NC_003485.1"/>
</dbReference>
<dbReference type="SMR" id="Q8P172"/>
<dbReference type="KEGG" id="spm:spyM18_1032"/>
<dbReference type="HOGENOM" id="CLU_031040_8_5_9"/>
<dbReference type="GO" id="GO:0005737">
    <property type="term" value="C:cytoplasm"/>
    <property type="evidence" value="ECO:0007669"/>
    <property type="project" value="TreeGrafter"/>
</dbReference>
<dbReference type="GO" id="GO:0033743">
    <property type="term" value="F:peptide-methionine (R)-S-oxide reductase activity"/>
    <property type="evidence" value="ECO:0007669"/>
    <property type="project" value="UniProtKB-UniRule"/>
</dbReference>
<dbReference type="GO" id="GO:0030091">
    <property type="term" value="P:protein repair"/>
    <property type="evidence" value="ECO:0007669"/>
    <property type="project" value="InterPro"/>
</dbReference>
<dbReference type="GO" id="GO:0006979">
    <property type="term" value="P:response to oxidative stress"/>
    <property type="evidence" value="ECO:0007669"/>
    <property type="project" value="InterPro"/>
</dbReference>
<dbReference type="FunFam" id="2.170.150.20:FF:000003">
    <property type="entry name" value="Peptide methionine sulfoxide reductase MsrB"/>
    <property type="match status" value="1"/>
</dbReference>
<dbReference type="Gene3D" id="2.170.150.20">
    <property type="entry name" value="Peptide methionine sulfoxide reductase"/>
    <property type="match status" value="1"/>
</dbReference>
<dbReference type="HAMAP" id="MF_01400">
    <property type="entry name" value="MsrB"/>
    <property type="match status" value="1"/>
</dbReference>
<dbReference type="InterPro" id="IPR028427">
    <property type="entry name" value="Met_Sox_Rdtase_MsrB"/>
</dbReference>
<dbReference type="InterPro" id="IPR002579">
    <property type="entry name" value="Met_Sox_Rdtase_MsrB_dom"/>
</dbReference>
<dbReference type="InterPro" id="IPR011057">
    <property type="entry name" value="Mss4-like_sf"/>
</dbReference>
<dbReference type="NCBIfam" id="TIGR00357">
    <property type="entry name" value="peptide-methionine (R)-S-oxide reductase MsrB"/>
    <property type="match status" value="1"/>
</dbReference>
<dbReference type="PANTHER" id="PTHR10173">
    <property type="entry name" value="METHIONINE SULFOXIDE REDUCTASE"/>
    <property type="match status" value="1"/>
</dbReference>
<dbReference type="PANTHER" id="PTHR10173:SF59">
    <property type="entry name" value="PEPTIDE METHIONINE SULFOXIDE REDUCTASE MSRA_MSRB"/>
    <property type="match status" value="1"/>
</dbReference>
<dbReference type="Pfam" id="PF01641">
    <property type="entry name" value="SelR"/>
    <property type="match status" value="1"/>
</dbReference>
<dbReference type="SUPFAM" id="SSF51316">
    <property type="entry name" value="Mss4-like"/>
    <property type="match status" value="1"/>
</dbReference>
<dbReference type="PROSITE" id="PS51790">
    <property type="entry name" value="MSRB"/>
    <property type="match status" value="1"/>
</dbReference>